<accession>A6USA4</accession>
<dbReference type="EC" id="2.4.2.48" evidence="1"/>
<dbReference type="EMBL" id="CP000742">
    <property type="protein sequence ID" value="ABR55376.1"/>
    <property type="molecule type" value="Genomic_DNA"/>
</dbReference>
<dbReference type="RefSeq" id="WP_012066290.1">
    <property type="nucleotide sequence ID" value="NC_009634.1"/>
</dbReference>
<dbReference type="SMR" id="A6USA4"/>
<dbReference type="STRING" id="406327.Mevan_1482"/>
<dbReference type="GeneID" id="5324812"/>
<dbReference type="KEGG" id="mvn:Mevan_1482"/>
<dbReference type="eggNOG" id="arCOG00989">
    <property type="taxonomic scope" value="Archaea"/>
</dbReference>
<dbReference type="eggNOG" id="arCOG00991">
    <property type="taxonomic scope" value="Archaea"/>
</dbReference>
<dbReference type="HOGENOM" id="CLU_030083_0_0_2"/>
<dbReference type="OrthoDB" id="6871at2157"/>
<dbReference type="UniPathway" id="UPA00393"/>
<dbReference type="Proteomes" id="UP000001107">
    <property type="component" value="Chromosome"/>
</dbReference>
<dbReference type="GO" id="GO:0005737">
    <property type="term" value="C:cytoplasm"/>
    <property type="evidence" value="ECO:0007669"/>
    <property type="project" value="TreeGrafter"/>
</dbReference>
<dbReference type="GO" id="GO:0016763">
    <property type="term" value="F:pentosyltransferase activity"/>
    <property type="evidence" value="ECO:0007669"/>
    <property type="project" value="UniProtKB-UniRule"/>
</dbReference>
<dbReference type="GO" id="GO:0003723">
    <property type="term" value="F:RNA binding"/>
    <property type="evidence" value="ECO:0007669"/>
    <property type="project" value="InterPro"/>
</dbReference>
<dbReference type="GO" id="GO:0008270">
    <property type="term" value="F:zinc ion binding"/>
    <property type="evidence" value="ECO:0007669"/>
    <property type="project" value="UniProtKB-UniRule"/>
</dbReference>
<dbReference type="GO" id="GO:0002099">
    <property type="term" value="P:tRNA wobble guanine modification"/>
    <property type="evidence" value="ECO:0007669"/>
    <property type="project" value="TreeGrafter"/>
</dbReference>
<dbReference type="CDD" id="cd21149">
    <property type="entry name" value="PUA_archaeosine_TGT"/>
    <property type="match status" value="1"/>
</dbReference>
<dbReference type="Gene3D" id="3.90.1020.10">
    <property type="entry name" value="ArcTGT, C1 domain"/>
    <property type="match status" value="1"/>
</dbReference>
<dbReference type="Gene3D" id="3.10.450.90">
    <property type="entry name" value="ArcTGT, C2 domain"/>
    <property type="match status" value="1"/>
</dbReference>
<dbReference type="Gene3D" id="2.30.130.10">
    <property type="entry name" value="PUA domain"/>
    <property type="match status" value="1"/>
</dbReference>
<dbReference type="Gene3D" id="3.20.20.105">
    <property type="entry name" value="Queuine tRNA-ribosyltransferase-like"/>
    <property type="match status" value="1"/>
</dbReference>
<dbReference type="HAMAP" id="MF_01634">
    <property type="entry name" value="TgtA_arch"/>
    <property type="match status" value="1"/>
</dbReference>
<dbReference type="InterPro" id="IPR050076">
    <property type="entry name" value="ArchSynthase1/Queuine_TRR"/>
</dbReference>
<dbReference type="InterPro" id="IPR038370">
    <property type="entry name" value="ArcTGT_C1_sf"/>
</dbReference>
<dbReference type="InterPro" id="IPR002478">
    <property type="entry name" value="PUA"/>
</dbReference>
<dbReference type="InterPro" id="IPR015947">
    <property type="entry name" value="PUA-like_sf"/>
</dbReference>
<dbReference type="InterPro" id="IPR036974">
    <property type="entry name" value="PUA_sf"/>
</dbReference>
<dbReference type="InterPro" id="IPR036511">
    <property type="entry name" value="TGT-like_sf"/>
</dbReference>
<dbReference type="InterPro" id="IPR029402">
    <property type="entry name" value="TGT_C2"/>
</dbReference>
<dbReference type="InterPro" id="IPR038250">
    <property type="entry name" value="TGT_C2_sf"/>
</dbReference>
<dbReference type="InterPro" id="IPR004804">
    <property type="entry name" value="TgtA"/>
</dbReference>
<dbReference type="InterPro" id="IPR002616">
    <property type="entry name" value="tRNA_ribo_trans-like"/>
</dbReference>
<dbReference type="InterPro" id="IPR004521">
    <property type="entry name" value="Uncharacterised_CHP00451"/>
</dbReference>
<dbReference type="NCBIfam" id="TIGR00432">
    <property type="entry name" value="arcsn_tRNA_tgt"/>
    <property type="match status" value="1"/>
</dbReference>
<dbReference type="NCBIfam" id="TIGR00449">
    <property type="entry name" value="tgt_general"/>
    <property type="match status" value="1"/>
</dbReference>
<dbReference type="NCBIfam" id="TIGR00451">
    <property type="entry name" value="unchar_dom_2"/>
    <property type="match status" value="1"/>
</dbReference>
<dbReference type="PANTHER" id="PTHR46499">
    <property type="entry name" value="QUEUINE TRNA-RIBOSYLTRANSFERASE"/>
    <property type="match status" value="1"/>
</dbReference>
<dbReference type="PANTHER" id="PTHR46499:SF1">
    <property type="entry name" value="QUEUINE TRNA-RIBOSYLTRANSFERASE"/>
    <property type="match status" value="1"/>
</dbReference>
<dbReference type="Pfam" id="PF01472">
    <property type="entry name" value="PUA"/>
    <property type="match status" value="1"/>
</dbReference>
<dbReference type="Pfam" id="PF01702">
    <property type="entry name" value="TGT"/>
    <property type="match status" value="1"/>
</dbReference>
<dbReference type="Pfam" id="PF14810">
    <property type="entry name" value="TGT_C2"/>
    <property type="match status" value="1"/>
</dbReference>
<dbReference type="SMART" id="SM00359">
    <property type="entry name" value="PUA"/>
    <property type="match status" value="1"/>
</dbReference>
<dbReference type="SUPFAM" id="SSF88802">
    <property type="entry name" value="Pre-PUA domain"/>
    <property type="match status" value="1"/>
</dbReference>
<dbReference type="SUPFAM" id="SSF88697">
    <property type="entry name" value="PUA domain-like"/>
    <property type="match status" value="1"/>
</dbReference>
<dbReference type="SUPFAM" id="SSF51713">
    <property type="entry name" value="tRNA-guanine transglycosylase"/>
    <property type="match status" value="1"/>
</dbReference>
<dbReference type="PROSITE" id="PS50890">
    <property type="entry name" value="PUA"/>
    <property type="match status" value="1"/>
</dbReference>
<evidence type="ECO:0000255" key="1">
    <source>
        <dbReference type="HAMAP-Rule" id="MF_01634"/>
    </source>
</evidence>
<feature type="chain" id="PRO_1000088168" description="tRNA-guanine(15) transglycosylase">
    <location>
        <begin position="1"/>
        <end position="649"/>
    </location>
</feature>
<feature type="domain" description="PUA" evidence="1">
    <location>
        <begin position="572"/>
        <end position="647"/>
    </location>
</feature>
<feature type="active site" description="Nucleophile" evidence="1">
    <location>
        <position position="88"/>
    </location>
</feature>
<feature type="binding site" evidence="1">
    <location>
        <position position="123"/>
    </location>
    <ligand>
        <name>substrate</name>
    </ligand>
</feature>
<feature type="binding site" evidence="1">
    <location>
        <position position="194"/>
    </location>
    <ligand>
        <name>substrate</name>
    </ligand>
</feature>
<feature type="binding site" evidence="1">
    <location>
        <position position="280"/>
    </location>
    <ligand>
        <name>Zn(2+)</name>
        <dbReference type="ChEBI" id="CHEBI:29105"/>
    </ligand>
</feature>
<feature type="binding site" evidence="1">
    <location>
        <position position="282"/>
    </location>
    <ligand>
        <name>Zn(2+)</name>
        <dbReference type="ChEBI" id="CHEBI:29105"/>
    </ligand>
</feature>
<feature type="binding site" evidence="1">
    <location>
        <position position="285"/>
    </location>
    <ligand>
        <name>Zn(2+)</name>
        <dbReference type="ChEBI" id="CHEBI:29105"/>
    </ligand>
</feature>
<proteinExistence type="inferred from homology"/>
<name>ATGT_METVS</name>
<organism>
    <name type="scientific">Methanococcus vannielii (strain ATCC 35089 / DSM 1224 / JCM 13029 / OCM 148 / SB)</name>
    <dbReference type="NCBI Taxonomy" id="406327"/>
    <lineage>
        <taxon>Archaea</taxon>
        <taxon>Methanobacteriati</taxon>
        <taxon>Methanobacteriota</taxon>
        <taxon>Methanomada group</taxon>
        <taxon>Methanococci</taxon>
        <taxon>Methanococcales</taxon>
        <taxon>Methanococcaceae</taxon>
        <taxon>Methanococcus</taxon>
    </lineage>
</organism>
<comment type="function">
    <text evidence="1">Exchanges the guanine residue with 7-cyano-7-deazaguanine (preQ0) at position 15 in the dihydrouridine loop (D-loop) of archaeal tRNAs.</text>
</comment>
<comment type="catalytic activity">
    <reaction evidence="1">
        <text>guanosine(15) in tRNA + 7-cyano-7-deazaguanine = 7-cyano-7-carbaguanosine(15) in tRNA + guanine</text>
        <dbReference type="Rhea" id="RHEA:43164"/>
        <dbReference type="Rhea" id="RHEA-COMP:10371"/>
        <dbReference type="Rhea" id="RHEA-COMP:10372"/>
        <dbReference type="ChEBI" id="CHEBI:16235"/>
        <dbReference type="ChEBI" id="CHEBI:45075"/>
        <dbReference type="ChEBI" id="CHEBI:74269"/>
        <dbReference type="ChEBI" id="CHEBI:82850"/>
        <dbReference type="EC" id="2.4.2.48"/>
    </reaction>
</comment>
<comment type="cofactor">
    <cofactor evidence="1">
        <name>Zn(2+)</name>
        <dbReference type="ChEBI" id="CHEBI:29105"/>
    </cofactor>
    <text evidence="1">Binds 1 zinc ion per subunit.</text>
</comment>
<comment type="pathway">
    <text evidence="1">tRNA modification; archaeosine-tRNA biosynthesis.</text>
</comment>
<comment type="similarity">
    <text evidence="1">Belongs to the archaeosine tRNA-ribosyltransferase family.</text>
</comment>
<sequence length="649" mass="74731">MFEIKARDAMGRLGLIKINGKKIETPTIMPVVHPNPKKQTVSIDLINKLSDVIITNSYITYTTPELREIAENKGIHHLTGFKNVVVTDSGSFQLSVYGNVNVEPMEIIDFQEKIGVDVGTILDIPTAPDVSREKAEKELLETFKRAEDSIQRRNDRNYKLALNGTVQGSTHLDLRRKSAEVMGKMDFEIYPIGAVVPLMEDYRYREVSEIIINSKMHLPTNKPVHLFGCGHPMLFALSVALGCDLFDSAAYALYAKNGRYLTENGTLHLDELKDLKNFPCSCKVCSEYTPKQLQNMKEKERERLLAEHNLYVTFEEIDRIKNAIKDGNLWELVEERCRSHPKLLNGLRVISKYMDFIEKYDPVSKKSGFFYTGYESMARPEIYRHKQRLNRLKFDKIYVTSISEKINTPYSENLNNIPCDVDVLIKDSVFGLVPLNIDTMYPLSQNEIPDLYDFEKNYNNDFISEFLENNAEKVLDISTYNYYISHYNSKKECEKINPDLLRISRMLEYQYGAKIIDNDFEKLSVRRSKTSGRIRNVLLDKEVVFTVRASDNFLIPAKLGAEMLHKKLEFPKYRVIVDKSVEEFARAGKSVYSKFVINCDKELRPFEEVLVVNENDDLLAYGTNLLNSQELMEFDYGVAVNIRGGLKLE</sequence>
<protein>
    <recommendedName>
        <fullName evidence="1">tRNA-guanine(15) transglycosylase</fullName>
        <ecNumber evidence="1">2.4.2.48</ecNumber>
    </recommendedName>
    <alternativeName>
        <fullName evidence="1">7-cyano-7-deazaguanine tRNA-ribosyltransferase</fullName>
    </alternativeName>
    <alternativeName>
        <fullName evidence="1">Archaeal tRNA-guanine transglycosylase</fullName>
    </alternativeName>
</protein>
<gene>
    <name evidence="1" type="primary">tgtA</name>
    <name type="ordered locus">Mevan_1482</name>
</gene>
<reference key="1">
    <citation type="submission" date="2007-06" db="EMBL/GenBank/DDBJ databases">
        <title>Complete sequence of Methanococcus vannielii SB.</title>
        <authorList>
            <consortium name="US DOE Joint Genome Institute"/>
            <person name="Copeland A."/>
            <person name="Lucas S."/>
            <person name="Lapidus A."/>
            <person name="Barry K."/>
            <person name="Glavina del Rio T."/>
            <person name="Dalin E."/>
            <person name="Tice H."/>
            <person name="Pitluck S."/>
            <person name="Chain P."/>
            <person name="Malfatti S."/>
            <person name="Shin M."/>
            <person name="Vergez L."/>
            <person name="Schmutz J."/>
            <person name="Larimer F."/>
            <person name="Land M."/>
            <person name="Hauser L."/>
            <person name="Kyrpides N."/>
            <person name="Anderson I."/>
            <person name="Sieprawska-Lupa M."/>
            <person name="Whitman W.B."/>
            <person name="Richardson P."/>
        </authorList>
    </citation>
    <scope>NUCLEOTIDE SEQUENCE [LARGE SCALE GENOMIC DNA]</scope>
    <source>
        <strain>ATCC 35089 / DSM 1224 / JCM 13029 / OCM 148 / SB</strain>
    </source>
</reference>
<keyword id="KW-0328">Glycosyltransferase</keyword>
<keyword id="KW-0479">Metal-binding</keyword>
<keyword id="KW-0808">Transferase</keyword>
<keyword id="KW-0819">tRNA processing</keyword>
<keyword id="KW-0862">Zinc</keyword>